<evidence type="ECO:0000250" key="1">
    <source>
        <dbReference type="UniProtKB" id="O35599"/>
    </source>
</evidence>
<evidence type="ECO:0000250" key="2">
    <source>
        <dbReference type="UniProtKB" id="P04001"/>
    </source>
</evidence>
<evidence type="ECO:0000255" key="3"/>
<evidence type="ECO:0000255" key="4">
    <source>
        <dbReference type="PROSITE-ProRule" id="PRU00521"/>
    </source>
</evidence>
<feature type="chain" id="PRO_0000197789" description="Medium-wave-sensitive opsin 1">
    <location>
        <begin position="1"/>
        <end position="359"/>
    </location>
</feature>
<feature type="topological domain" description="Extracellular" evidence="3">
    <location>
        <begin position="1"/>
        <end position="47"/>
    </location>
</feature>
<feature type="transmembrane region" description="Helical; Name=1" evidence="3">
    <location>
        <begin position="48"/>
        <end position="72"/>
    </location>
</feature>
<feature type="topological domain" description="Cytoplasmic" evidence="3">
    <location>
        <begin position="73"/>
        <end position="84"/>
    </location>
</feature>
<feature type="transmembrane region" description="Helical; Name=2" evidence="3">
    <location>
        <begin position="85"/>
        <end position="110"/>
    </location>
</feature>
<feature type="topological domain" description="Extracellular" evidence="3">
    <location>
        <begin position="111"/>
        <end position="124"/>
    </location>
</feature>
<feature type="transmembrane region" description="Helical; Name=3" evidence="3">
    <location>
        <begin position="125"/>
        <end position="144"/>
    </location>
</feature>
<feature type="topological domain" description="Cytoplasmic" evidence="3">
    <location>
        <begin position="145"/>
        <end position="163"/>
    </location>
</feature>
<feature type="transmembrane region" description="Helical; Name=4" evidence="3">
    <location>
        <begin position="164"/>
        <end position="187"/>
    </location>
</feature>
<feature type="topological domain" description="Extracellular" evidence="3">
    <location>
        <begin position="188"/>
        <end position="213"/>
    </location>
</feature>
<feature type="transmembrane region" description="Helical; Name=5" evidence="3">
    <location>
        <begin position="214"/>
        <end position="241"/>
    </location>
</feature>
<feature type="topological domain" description="Cytoplasmic" evidence="3">
    <location>
        <begin position="242"/>
        <end position="263"/>
    </location>
</feature>
<feature type="transmembrane region" description="Helical; Name=6" evidence="3">
    <location>
        <begin position="264"/>
        <end position="287"/>
    </location>
</feature>
<feature type="topological domain" description="Extracellular" evidence="3">
    <location>
        <begin position="288"/>
        <end position="295"/>
    </location>
</feature>
<feature type="transmembrane region" description="Helical; Name=7" evidence="3">
    <location>
        <begin position="296"/>
        <end position="320"/>
    </location>
</feature>
<feature type="topological domain" description="Cytoplasmic" evidence="3">
    <location>
        <begin position="321"/>
        <end position="359"/>
    </location>
</feature>
<feature type="region of interest" description="Required for 11-cis-retinal regeneration" evidence="2">
    <location>
        <begin position="12"/>
        <end position="38"/>
    </location>
</feature>
<feature type="modified residue" description="N6-(retinylidene)lysine">
    <location>
        <position position="307"/>
    </location>
</feature>
<feature type="glycosylation site" description="N-linked (GlcNAc...) asparagine" evidence="3">
    <location>
        <position position="29"/>
    </location>
</feature>
<feature type="disulfide bond" evidence="4">
    <location>
        <begin position="121"/>
        <end position="198"/>
    </location>
</feature>
<sequence length="359" mass="40200">MAQQLTGEQTLDHYEDSTQASIFTYTNSNSTRGPFEGPNYHIAPRWVYHLTSTWMILVVIASVFTNGLVLAATMRFKKLRHPLNWILVNLAVADLAETIIASTISVVNQIYGYFVLGHPLCVIEGYIVSLCGITGLWSLAIISWERWLVVCKPFGNVRFDAKLATVGIVFSWVWAAVWTAPPIFGWSRYWPYGLKTSCGPDVFSGTSYPGVQSYMMVLMVTCCIFPLSIIVLCYLQVWLAIRAVAKQQKESESTQKAEKEVTRMVVVMVFAYCLCWGPYTFFACFATAHPGYAFHPLVASLPSYFAKSATIYNPIIYVFMNRQFRNCILQLFGKKVDDSSELSSTSKTEVSSVSSVSPA</sequence>
<accession>O35476</accession>
<reference key="1">
    <citation type="journal article" date="1998" name="Gene">
        <title>Genetic analyses of the green visual pigments of rabbit (Oryctolagus cuniculus) and rat (Rattus norvegicus).</title>
        <authorList>
            <person name="Radlwimmer F.B."/>
            <person name="Yokoyama S."/>
        </authorList>
    </citation>
    <scope>NUCLEOTIDE SEQUENCE [GENOMIC DNA]</scope>
</reference>
<reference key="2">
    <citation type="journal article" date="1998" name="Mol. Biol. Evol.">
        <title>The 'five-sites' rule and the evolution of red and green color vision in mammals.</title>
        <authorList>
            <person name="Yokoyama S."/>
            <person name="Radlwimmer F.B."/>
        </authorList>
    </citation>
    <scope>NUCLEOTIDE SEQUENCE [MRNA] OF 43-315</scope>
</reference>
<proteinExistence type="evidence at protein level"/>
<dbReference type="EMBL" id="AF054246">
    <property type="protein sequence ID" value="AAC64920.1"/>
    <property type="molecule type" value="Genomic_DNA"/>
</dbReference>
<dbReference type="EMBL" id="AF054241">
    <property type="protein sequence ID" value="AAC64920.1"/>
    <property type="status" value="JOINED"/>
    <property type="molecule type" value="Genomic_DNA"/>
</dbReference>
<dbReference type="EMBL" id="AF054242">
    <property type="protein sequence ID" value="AAC64920.1"/>
    <property type="status" value="JOINED"/>
    <property type="molecule type" value="Genomic_DNA"/>
</dbReference>
<dbReference type="EMBL" id="AF054243">
    <property type="protein sequence ID" value="AAC64920.1"/>
    <property type="status" value="JOINED"/>
    <property type="molecule type" value="Genomic_DNA"/>
</dbReference>
<dbReference type="EMBL" id="AF054244">
    <property type="protein sequence ID" value="AAC64920.1"/>
    <property type="status" value="JOINED"/>
    <property type="molecule type" value="Genomic_DNA"/>
</dbReference>
<dbReference type="EMBL" id="AF054245">
    <property type="protein sequence ID" value="AAC64920.1"/>
    <property type="status" value="JOINED"/>
    <property type="molecule type" value="Genomic_DNA"/>
</dbReference>
<dbReference type="EMBL" id="AF031528">
    <property type="protein sequence ID" value="AAB86946.1"/>
    <property type="molecule type" value="mRNA"/>
</dbReference>
<dbReference type="RefSeq" id="NP_446000.1">
    <property type="nucleotide sequence ID" value="NM_053548.2"/>
</dbReference>
<dbReference type="SMR" id="O35476"/>
<dbReference type="FunCoup" id="O35476">
    <property type="interactions" value="16"/>
</dbReference>
<dbReference type="STRING" id="10116.ENSRNOP00000072867"/>
<dbReference type="GlyCosmos" id="O35476">
    <property type="glycosylation" value="1 site, No reported glycans"/>
</dbReference>
<dbReference type="GlyGen" id="O35476">
    <property type="glycosylation" value="1 site"/>
</dbReference>
<dbReference type="PhosphoSitePlus" id="O35476"/>
<dbReference type="PaxDb" id="10116-ENSRNOP00000053164"/>
<dbReference type="Ensembl" id="ENSRNOT00000083147.2">
    <property type="protein sequence ID" value="ENSRNOP00000072867.1"/>
    <property type="gene ID" value="ENSRNOG00000051529.2"/>
</dbReference>
<dbReference type="GeneID" id="89810"/>
<dbReference type="KEGG" id="rno:89810"/>
<dbReference type="AGR" id="RGD:620978"/>
<dbReference type="CTD" id="2652"/>
<dbReference type="RGD" id="620978">
    <property type="gene designation" value="Opn1mw"/>
</dbReference>
<dbReference type="eggNOG" id="KOG3656">
    <property type="taxonomic scope" value="Eukaryota"/>
</dbReference>
<dbReference type="GeneTree" id="ENSGT01030000234549"/>
<dbReference type="HOGENOM" id="CLU_009579_3_0_1"/>
<dbReference type="InParanoid" id="O35476"/>
<dbReference type="OrthoDB" id="8545112at2759"/>
<dbReference type="Reactome" id="R-RNO-2187335">
    <property type="pathway name" value="The retinoid cycle in cones (daylight vision)"/>
</dbReference>
<dbReference type="Reactome" id="R-RNO-418594">
    <property type="pathway name" value="G alpha (i) signalling events"/>
</dbReference>
<dbReference type="Reactome" id="R-RNO-419771">
    <property type="pathway name" value="Opsins"/>
</dbReference>
<dbReference type="PRO" id="PR:O35476"/>
<dbReference type="Proteomes" id="UP000002494">
    <property type="component" value="Chromosome X"/>
</dbReference>
<dbReference type="GO" id="GO:0001750">
    <property type="term" value="C:photoreceptor outer segment"/>
    <property type="evidence" value="ECO:0000314"/>
    <property type="project" value="RGD"/>
</dbReference>
<dbReference type="GO" id="GO:0005886">
    <property type="term" value="C:plasma membrane"/>
    <property type="evidence" value="ECO:0000250"/>
    <property type="project" value="UniProtKB"/>
</dbReference>
<dbReference type="GO" id="GO:0008020">
    <property type="term" value="F:G protein-coupled photoreceptor activity"/>
    <property type="evidence" value="ECO:0000318"/>
    <property type="project" value="GO_Central"/>
</dbReference>
<dbReference type="GO" id="GO:0042802">
    <property type="term" value="F:identical protein binding"/>
    <property type="evidence" value="ECO:0000250"/>
    <property type="project" value="UniProtKB"/>
</dbReference>
<dbReference type="GO" id="GO:0009881">
    <property type="term" value="F:photoreceptor activity"/>
    <property type="evidence" value="ECO:0000266"/>
    <property type="project" value="RGD"/>
</dbReference>
<dbReference type="GO" id="GO:0071482">
    <property type="term" value="P:cellular response to light stimulus"/>
    <property type="evidence" value="ECO:0000318"/>
    <property type="project" value="GO_Central"/>
</dbReference>
<dbReference type="GO" id="GO:0007186">
    <property type="term" value="P:G protein-coupled receptor signaling pathway"/>
    <property type="evidence" value="ECO:0000318"/>
    <property type="project" value="GO_Central"/>
</dbReference>
<dbReference type="GO" id="GO:0007602">
    <property type="term" value="P:phototransduction"/>
    <property type="evidence" value="ECO:0000318"/>
    <property type="project" value="GO_Central"/>
</dbReference>
<dbReference type="GO" id="GO:0032467">
    <property type="term" value="P:positive regulation of cytokinesis"/>
    <property type="evidence" value="ECO:0000266"/>
    <property type="project" value="RGD"/>
</dbReference>
<dbReference type="GO" id="GO:0007601">
    <property type="term" value="P:visual perception"/>
    <property type="evidence" value="ECO:0007669"/>
    <property type="project" value="UniProtKB-KW"/>
</dbReference>
<dbReference type="FunFam" id="1.20.1070.10:FF:000090">
    <property type="entry name" value="Long-wave-sensitive opsin 1"/>
    <property type="match status" value="1"/>
</dbReference>
<dbReference type="Gene3D" id="1.20.1070.10">
    <property type="entry name" value="Rhodopsin 7-helix transmembrane proteins"/>
    <property type="match status" value="1"/>
</dbReference>
<dbReference type="InterPro" id="IPR050125">
    <property type="entry name" value="GPCR_opsins"/>
</dbReference>
<dbReference type="InterPro" id="IPR000276">
    <property type="entry name" value="GPCR_Rhodpsn"/>
</dbReference>
<dbReference type="InterPro" id="IPR017452">
    <property type="entry name" value="GPCR_Rhodpsn_7TM"/>
</dbReference>
<dbReference type="InterPro" id="IPR001760">
    <property type="entry name" value="Opsin"/>
</dbReference>
<dbReference type="InterPro" id="IPR000378">
    <property type="entry name" value="Opsin_red/grn"/>
</dbReference>
<dbReference type="InterPro" id="IPR027430">
    <property type="entry name" value="Retinal_BS"/>
</dbReference>
<dbReference type="PANTHER" id="PTHR24240">
    <property type="entry name" value="OPSIN"/>
    <property type="match status" value="1"/>
</dbReference>
<dbReference type="Pfam" id="PF00001">
    <property type="entry name" value="7tm_1"/>
    <property type="match status" value="1"/>
</dbReference>
<dbReference type="PRINTS" id="PR00237">
    <property type="entry name" value="GPCRRHODOPSN"/>
</dbReference>
<dbReference type="PRINTS" id="PR00238">
    <property type="entry name" value="OPSIN"/>
</dbReference>
<dbReference type="PRINTS" id="PR00575">
    <property type="entry name" value="OPSINREDGRN"/>
</dbReference>
<dbReference type="SMART" id="SM01381">
    <property type="entry name" value="7TM_GPCR_Srsx"/>
    <property type="match status" value="1"/>
</dbReference>
<dbReference type="SUPFAM" id="SSF81321">
    <property type="entry name" value="Family A G protein-coupled receptor-like"/>
    <property type="match status" value="1"/>
</dbReference>
<dbReference type="PROSITE" id="PS00237">
    <property type="entry name" value="G_PROTEIN_RECEP_F1_1"/>
    <property type="match status" value="1"/>
</dbReference>
<dbReference type="PROSITE" id="PS50262">
    <property type="entry name" value="G_PROTEIN_RECEP_F1_2"/>
    <property type="match status" value="1"/>
</dbReference>
<dbReference type="PROSITE" id="PS00238">
    <property type="entry name" value="OPSIN"/>
    <property type="match status" value="1"/>
</dbReference>
<name>OPSG_RAT</name>
<keyword id="KW-0157">Chromophore</keyword>
<keyword id="KW-1015">Disulfide bond</keyword>
<keyword id="KW-0297">G-protein coupled receptor</keyword>
<keyword id="KW-0325">Glycoprotein</keyword>
<keyword id="KW-0472">Membrane</keyword>
<keyword id="KW-0597">Phosphoprotein</keyword>
<keyword id="KW-0600">Photoreceptor protein</keyword>
<keyword id="KW-0675">Receptor</keyword>
<keyword id="KW-1185">Reference proteome</keyword>
<keyword id="KW-0681">Retinal protein</keyword>
<keyword id="KW-0716">Sensory transduction</keyword>
<keyword id="KW-0807">Transducer</keyword>
<keyword id="KW-0812">Transmembrane</keyword>
<keyword id="KW-1133">Transmembrane helix</keyword>
<keyword id="KW-0844">Vision</keyword>
<organism>
    <name type="scientific">Rattus norvegicus</name>
    <name type="common">Rat</name>
    <dbReference type="NCBI Taxonomy" id="10116"/>
    <lineage>
        <taxon>Eukaryota</taxon>
        <taxon>Metazoa</taxon>
        <taxon>Chordata</taxon>
        <taxon>Craniata</taxon>
        <taxon>Vertebrata</taxon>
        <taxon>Euteleostomi</taxon>
        <taxon>Mammalia</taxon>
        <taxon>Eutheria</taxon>
        <taxon>Euarchontoglires</taxon>
        <taxon>Glires</taxon>
        <taxon>Rodentia</taxon>
        <taxon>Myomorpha</taxon>
        <taxon>Muroidea</taxon>
        <taxon>Muridae</taxon>
        <taxon>Murinae</taxon>
        <taxon>Rattus</taxon>
    </lineage>
</organism>
<protein>
    <recommendedName>
        <fullName>Medium-wave-sensitive opsin 1</fullName>
    </recommendedName>
    <alternativeName>
        <fullName>Green cone photoreceptor pigment</fullName>
    </alternativeName>
    <alternativeName>
        <fullName>Green-sensitive opsin</fullName>
    </alternativeName>
    <alternativeName>
        <fullName>Medium wavelength-sensitive cone opsin</fullName>
    </alternativeName>
</protein>
<gene>
    <name type="primary">Opn1mw</name>
    <name type="synonym">Gcp</name>
</gene>
<comment type="function">
    <text>Visual pigments are the light-absorbing molecules that mediate vision. They consist of an apoprotein, opsin, covalently linked to cis-retinal. May increase spectral sensitivity in dim light.</text>
</comment>
<comment type="biophysicochemical properties">
    <absorption>
        <max>509 nm</max>
    </absorption>
</comment>
<comment type="subunit">
    <text evidence="2">Monomer. Homodimer. Homotetramer.</text>
</comment>
<comment type="subcellular location">
    <subcellularLocation>
        <location>Membrane</location>
        <topology>Multi-pass membrane protein</topology>
    </subcellularLocation>
</comment>
<comment type="tissue specificity">
    <text>Expressed in cone photoreceptor cells.</text>
</comment>
<comment type="PTM">
    <text evidence="1">O-glycosylated.</text>
</comment>
<comment type="PTM">
    <text>Phosphorylated on some or all of the serine and threonine residues present in the C-terminal region.</text>
</comment>
<comment type="similarity">
    <text evidence="4">Belongs to the G-protein coupled receptor 1 family. Opsin subfamily.</text>
</comment>